<protein>
    <recommendedName>
        <fullName evidence="1">Anthranilate phosphoribosyltransferase</fullName>
        <ecNumber evidence="1">2.4.2.18</ecNumber>
    </recommendedName>
</protein>
<proteinExistence type="inferred from homology"/>
<reference key="1">
    <citation type="journal article" date="2005" name="Infect. Immun.">
        <title>Whole-genome analyses of speciation events in pathogenic Brucellae.</title>
        <authorList>
            <person name="Chain P.S."/>
            <person name="Comerci D.J."/>
            <person name="Tolmasky M.E."/>
            <person name="Larimer F.W."/>
            <person name="Malfatti S.A."/>
            <person name="Vergez L.M."/>
            <person name="Aguero F."/>
            <person name="Land M.L."/>
            <person name="Ugalde R.A."/>
            <person name="Garcia E."/>
        </authorList>
    </citation>
    <scope>NUCLEOTIDE SEQUENCE [LARGE SCALE GENOMIC DNA]</scope>
    <source>
        <strain>2308</strain>
    </source>
</reference>
<comment type="function">
    <text evidence="1">Catalyzes the transfer of the phosphoribosyl group of 5-phosphorylribose-1-pyrophosphate (PRPP) to anthranilate to yield N-(5'-phosphoribosyl)-anthranilate (PRA).</text>
</comment>
<comment type="catalytic activity">
    <reaction evidence="1">
        <text>N-(5-phospho-beta-D-ribosyl)anthranilate + diphosphate = 5-phospho-alpha-D-ribose 1-diphosphate + anthranilate</text>
        <dbReference type="Rhea" id="RHEA:11768"/>
        <dbReference type="ChEBI" id="CHEBI:16567"/>
        <dbReference type="ChEBI" id="CHEBI:18277"/>
        <dbReference type="ChEBI" id="CHEBI:33019"/>
        <dbReference type="ChEBI" id="CHEBI:58017"/>
        <dbReference type="EC" id="2.4.2.18"/>
    </reaction>
</comment>
<comment type="cofactor">
    <cofactor evidence="1">
        <name>Mg(2+)</name>
        <dbReference type="ChEBI" id="CHEBI:18420"/>
    </cofactor>
    <text evidence="1">Binds 2 magnesium ions per monomer.</text>
</comment>
<comment type="pathway">
    <text evidence="1">Amino-acid biosynthesis; L-tryptophan biosynthesis; L-tryptophan from chorismate: step 2/5.</text>
</comment>
<comment type="subunit">
    <text evidence="1">Homodimer.</text>
</comment>
<comment type="similarity">
    <text evidence="1">Belongs to the anthranilate phosphoribosyltransferase family.</text>
</comment>
<accession>Q2YRR5</accession>
<dbReference type="EC" id="2.4.2.18" evidence="1"/>
<dbReference type="EMBL" id="AM040264">
    <property type="protein sequence ID" value="CAJ11119.1"/>
    <property type="molecule type" value="Genomic_DNA"/>
</dbReference>
<dbReference type="RefSeq" id="WP_002969119.1">
    <property type="nucleotide sequence ID" value="NZ_KN046823.1"/>
</dbReference>
<dbReference type="SMR" id="Q2YRR5"/>
<dbReference type="STRING" id="359391.BAB1_1163"/>
<dbReference type="GeneID" id="93016524"/>
<dbReference type="KEGG" id="bmf:BAB1_1163"/>
<dbReference type="PATRIC" id="fig|359391.11.peg.61"/>
<dbReference type="HOGENOM" id="CLU_034315_2_1_5"/>
<dbReference type="UniPathway" id="UPA00035">
    <property type="reaction ID" value="UER00041"/>
</dbReference>
<dbReference type="Proteomes" id="UP000002719">
    <property type="component" value="Chromosome I"/>
</dbReference>
<dbReference type="GO" id="GO:0005829">
    <property type="term" value="C:cytosol"/>
    <property type="evidence" value="ECO:0007669"/>
    <property type="project" value="TreeGrafter"/>
</dbReference>
<dbReference type="GO" id="GO:0004048">
    <property type="term" value="F:anthranilate phosphoribosyltransferase activity"/>
    <property type="evidence" value="ECO:0007669"/>
    <property type="project" value="UniProtKB-UniRule"/>
</dbReference>
<dbReference type="GO" id="GO:0000287">
    <property type="term" value="F:magnesium ion binding"/>
    <property type="evidence" value="ECO:0007669"/>
    <property type="project" value="UniProtKB-UniRule"/>
</dbReference>
<dbReference type="GO" id="GO:0000162">
    <property type="term" value="P:L-tryptophan biosynthetic process"/>
    <property type="evidence" value="ECO:0007669"/>
    <property type="project" value="UniProtKB-UniRule"/>
</dbReference>
<dbReference type="FunFam" id="3.40.1030.10:FF:000002">
    <property type="entry name" value="Anthranilate phosphoribosyltransferase"/>
    <property type="match status" value="1"/>
</dbReference>
<dbReference type="Gene3D" id="3.40.1030.10">
    <property type="entry name" value="Nucleoside phosphorylase/phosphoribosyltransferase catalytic domain"/>
    <property type="match status" value="1"/>
</dbReference>
<dbReference type="Gene3D" id="1.20.970.10">
    <property type="entry name" value="Transferase, Pyrimidine Nucleoside Phosphorylase, Chain C"/>
    <property type="match status" value="1"/>
</dbReference>
<dbReference type="HAMAP" id="MF_00211">
    <property type="entry name" value="TrpD"/>
    <property type="match status" value="1"/>
</dbReference>
<dbReference type="InterPro" id="IPR005940">
    <property type="entry name" value="Anthranilate_Pribosyl_Tfrase"/>
</dbReference>
<dbReference type="InterPro" id="IPR000312">
    <property type="entry name" value="Glycosyl_Trfase_fam3"/>
</dbReference>
<dbReference type="InterPro" id="IPR017459">
    <property type="entry name" value="Glycosyl_Trfase_fam3_N_dom"/>
</dbReference>
<dbReference type="InterPro" id="IPR036320">
    <property type="entry name" value="Glycosyl_Trfase_fam3_N_dom_sf"/>
</dbReference>
<dbReference type="InterPro" id="IPR035902">
    <property type="entry name" value="Nuc_phospho_transferase"/>
</dbReference>
<dbReference type="NCBIfam" id="TIGR01245">
    <property type="entry name" value="trpD"/>
    <property type="match status" value="1"/>
</dbReference>
<dbReference type="PANTHER" id="PTHR43285">
    <property type="entry name" value="ANTHRANILATE PHOSPHORIBOSYLTRANSFERASE"/>
    <property type="match status" value="1"/>
</dbReference>
<dbReference type="PANTHER" id="PTHR43285:SF2">
    <property type="entry name" value="ANTHRANILATE PHOSPHORIBOSYLTRANSFERASE"/>
    <property type="match status" value="1"/>
</dbReference>
<dbReference type="Pfam" id="PF02885">
    <property type="entry name" value="Glycos_trans_3N"/>
    <property type="match status" value="1"/>
</dbReference>
<dbReference type="Pfam" id="PF00591">
    <property type="entry name" value="Glycos_transf_3"/>
    <property type="match status" value="1"/>
</dbReference>
<dbReference type="SUPFAM" id="SSF52418">
    <property type="entry name" value="Nucleoside phosphorylase/phosphoribosyltransferase catalytic domain"/>
    <property type="match status" value="1"/>
</dbReference>
<dbReference type="SUPFAM" id="SSF47648">
    <property type="entry name" value="Nucleoside phosphorylase/phosphoribosyltransferase N-terminal domain"/>
    <property type="match status" value="1"/>
</dbReference>
<feature type="chain" id="PRO_0000227140" description="Anthranilate phosphoribosyltransferase">
    <location>
        <begin position="1"/>
        <end position="339"/>
    </location>
</feature>
<feature type="binding site" evidence="1">
    <location>
        <position position="81"/>
    </location>
    <ligand>
        <name>5-phospho-alpha-D-ribose 1-diphosphate</name>
        <dbReference type="ChEBI" id="CHEBI:58017"/>
    </ligand>
</feature>
<feature type="binding site" evidence="1">
    <location>
        <position position="81"/>
    </location>
    <ligand>
        <name>anthranilate</name>
        <dbReference type="ChEBI" id="CHEBI:16567"/>
        <label>1</label>
    </ligand>
</feature>
<feature type="binding site" evidence="1">
    <location>
        <begin position="84"/>
        <end position="85"/>
    </location>
    <ligand>
        <name>5-phospho-alpha-D-ribose 1-diphosphate</name>
        <dbReference type="ChEBI" id="CHEBI:58017"/>
    </ligand>
</feature>
<feature type="binding site" evidence="1">
    <location>
        <position position="89"/>
    </location>
    <ligand>
        <name>5-phospho-alpha-D-ribose 1-diphosphate</name>
        <dbReference type="ChEBI" id="CHEBI:58017"/>
    </ligand>
</feature>
<feature type="binding site" evidence="1">
    <location>
        <begin position="91"/>
        <end position="94"/>
    </location>
    <ligand>
        <name>5-phospho-alpha-D-ribose 1-diphosphate</name>
        <dbReference type="ChEBI" id="CHEBI:58017"/>
    </ligand>
</feature>
<feature type="binding site" evidence="1">
    <location>
        <position position="93"/>
    </location>
    <ligand>
        <name>Mg(2+)</name>
        <dbReference type="ChEBI" id="CHEBI:18420"/>
        <label>1</label>
    </ligand>
</feature>
<feature type="binding site" evidence="1">
    <location>
        <begin position="109"/>
        <end position="117"/>
    </location>
    <ligand>
        <name>5-phospho-alpha-D-ribose 1-diphosphate</name>
        <dbReference type="ChEBI" id="CHEBI:58017"/>
    </ligand>
</feature>
<feature type="binding site" evidence="1">
    <location>
        <position position="112"/>
    </location>
    <ligand>
        <name>anthranilate</name>
        <dbReference type="ChEBI" id="CHEBI:16567"/>
        <label>1</label>
    </ligand>
</feature>
<feature type="binding site" evidence="1">
    <location>
        <position position="121"/>
    </location>
    <ligand>
        <name>5-phospho-alpha-D-ribose 1-diphosphate</name>
        <dbReference type="ChEBI" id="CHEBI:58017"/>
    </ligand>
</feature>
<feature type="binding site" evidence="1">
    <location>
        <position position="167"/>
    </location>
    <ligand>
        <name>anthranilate</name>
        <dbReference type="ChEBI" id="CHEBI:16567"/>
        <label>2</label>
    </ligand>
</feature>
<feature type="binding site" evidence="1">
    <location>
        <position position="225"/>
    </location>
    <ligand>
        <name>Mg(2+)</name>
        <dbReference type="ChEBI" id="CHEBI:18420"/>
        <label>2</label>
    </ligand>
</feature>
<feature type="binding site" evidence="1">
    <location>
        <position position="226"/>
    </location>
    <ligand>
        <name>Mg(2+)</name>
        <dbReference type="ChEBI" id="CHEBI:18420"/>
        <label>1</label>
    </ligand>
</feature>
<feature type="binding site" evidence="1">
    <location>
        <position position="226"/>
    </location>
    <ligand>
        <name>Mg(2+)</name>
        <dbReference type="ChEBI" id="CHEBI:18420"/>
        <label>2</label>
    </ligand>
</feature>
<gene>
    <name evidence="1" type="primary">trpD</name>
    <name type="ordered locus">BAB1_1163</name>
</gene>
<keyword id="KW-0028">Amino-acid biosynthesis</keyword>
<keyword id="KW-0057">Aromatic amino acid biosynthesis</keyword>
<keyword id="KW-0328">Glycosyltransferase</keyword>
<keyword id="KW-0460">Magnesium</keyword>
<keyword id="KW-0479">Metal-binding</keyword>
<keyword id="KW-1185">Reference proteome</keyword>
<keyword id="KW-0808">Transferase</keyword>
<keyword id="KW-0822">Tryptophan biosynthesis</keyword>
<name>TRPD_BRUA2</name>
<sequence length="339" mass="34839">MADLKPYIAKAASGEPLPLGDAKAAFDIMMSGQATPSQIGGFLMALRVRGETVPEIAGAVASMRSRMIPVIAPDDAMDIVGTGGDQSGSYNVSSCTAFVVAGAGVPVAKHGNRALSSRSGAADALAALGINIEADADTIGRSISEAGLGFMFAPMHHSAMRHVGPSRVELGTRTIFNLLGPLSNPASVKRQLVGVFAPQWLEPLAHVLKELGSETAWVVYGDGLDEMTTAGTTQVAALENGQIRTFEITPEEVGLRRCSPAELKGGEAAENAKALLGVLEGKDSAYRDIVLLNSGAALVVAGKAENLKDGIAQAVQSIDSGAALAVLQKVIAVSNDKPA</sequence>
<evidence type="ECO:0000255" key="1">
    <source>
        <dbReference type="HAMAP-Rule" id="MF_00211"/>
    </source>
</evidence>
<organism>
    <name type="scientific">Brucella abortus (strain 2308)</name>
    <dbReference type="NCBI Taxonomy" id="359391"/>
    <lineage>
        <taxon>Bacteria</taxon>
        <taxon>Pseudomonadati</taxon>
        <taxon>Pseudomonadota</taxon>
        <taxon>Alphaproteobacteria</taxon>
        <taxon>Hyphomicrobiales</taxon>
        <taxon>Brucellaceae</taxon>
        <taxon>Brucella/Ochrobactrum group</taxon>
        <taxon>Brucella</taxon>
    </lineage>
</organism>